<name>UR2R_MACMU</name>
<protein>
    <recommendedName>
        <fullName>Urotensin-2 receptor</fullName>
        <shortName>UR-2-R</shortName>
    </recommendedName>
    <alternativeName>
        <fullName>Urotensin II receptor</fullName>
        <shortName>UR-II-R</shortName>
    </alternativeName>
</protein>
<proteinExistence type="evidence at transcript level"/>
<organism>
    <name type="scientific">Macaca mulatta</name>
    <name type="common">Rhesus macaque</name>
    <dbReference type="NCBI Taxonomy" id="9544"/>
    <lineage>
        <taxon>Eukaryota</taxon>
        <taxon>Metazoa</taxon>
        <taxon>Chordata</taxon>
        <taxon>Craniata</taxon>
        <taxon>Vertebrata</taxon>
        <taxon>Euteleostomi</taxon>
        <taxon>Mammalia</taxon>
        <taxon>Eutheria</taxon>
        <taxon>Euarchontoglires</taxon>
        <taxon>Primates</taxon>
        <taxon>Haplorrhini</taxon>
        <taxon>Catarrhini</taxon>
        <taxon>Cercopithecidae</taxon>
        <taxon>Cercopithecinae</taxon>
        <taxon>Macaca</taxon>
    </lineage>
</organism>
<keyword id="KW-1003">Cell membrane</keyword>
<keyword id="KW-1015">Disulfide bond</keyword>
<keyword id="KW-0297">G-protein coupled receptor</keyword>
<keyword id="KW-0325">Glycoprotein</keyword>
<keyword id="KW-0472">Membrane</keyword>
<keyword id="KW-0675">Receptor</keyword>
<keyword id="KW-1185">Reference proteome</keyword>
<keyword id="KW-0807">Transducer</keyword>
<keyword id="KW-0812">Transmembrane</keyword>
<keyword id="KW-1133">Transmembrane helix</keyword>
<evidence type="ECO:0000250" key="1"/>
<evidence type="ECO:0000255" key="2"/>
<evidence type="ECO:0000255" key="3">
    <source>
        <dbReference type="PROSITE-ProRule" id="PRU00521"/>
    </source>
</evidence>
<evidence type="ECO:0000256" key="4">
    <source>
        <dbReference type="SAM" id="MobiDB-lite"/>
    </source>
</evidence>
<sequence length="389" mass="42126">MALTPESPSSFPGLAAIGSSVPEPPGSPNATLNSSWASPTEPSSLEDLVATGAIGTLLSAMGVVGVVGNAYTLVVTCRSLRAVASMYIYVVNLALADLLYLLSIPFIVATYITKEWHFGDVGCRVLFSLDFLTMHASIFTLTVMSSERYAAVLRPLDTVQRPKGYRKLLALGTWLLALLLTLPVMLAMRLVRRGPKSLCLPAWGPRAHRAYLTLLFATSIAGPGLLIGLLYARLARAYRRSQRASFKRARRPGARALRLVLGIVLLFWACFLPFWLWQLLAQYREAPLAPRTARIVNYLTTCLTYGNSCANPFLYTLLTRNYRDHLRGRVRSPGSGGVRGPVPSLQPRARFQRGSGRSLSSCSPQPTESLVLAAAAPAGPALESPGDPA</sequence>
<reference key="1">
    <citation type="journal article" date="2002" name="Br. J. Pharmacol.">
        <title>Molecular and pharmacological characterization of genes encoding urotensin-II peptides and their cognate G-protein-coupled receptors from the mouse and monkey.</title>
        <authorList>
            <person name="Elshourbagy N.A."/>
            <person name="Douglas S.A."/>
            <person name="Shabon U."/>
            <person name="Harrison S."/>
            <person name="Duddy G."/>
            <person name="Sechler J.L."/>
            <person name="Ao Z."/>
            <person name="Maleeff B.E."/>
            <person name="Naselsky D."/>
            <person name="Disa J."/>
            <person name="Aiyar N.V."/>
        </authorList>
    </citation>
    <scope>NUCLEOTIDE SEQUENCE [MRNA]</scope>
</reference>
<gene>
    <name type="primary">UTS2R</name>
</gene>
<comment type="function">
    <text evidence="1">High affinity receptor for urotensin-2 and urotensin-2B. The activity of this receptor is mediated by a G-protein that activate a phosphatidylinositol-calcium second messenger system (By similarity).</text>
</comment>
<comment type="subcellular location">
    <subcellularLocation>
        <location>Cell membrane</location>
        <topology>Multi-pass membrane protein</topology>
    </subcellularLocation>
</comment>
<comment type="similarity">
    <text evidence="3">Belongs to the G-protein coupled receptor 1 family.</text>
</comment>
<accession>Q8HYC3</accession>
<feature type="chain" id="PRO_0000070194" description="Urotensin-2 receptor">
    <location>
        <begin position="1"/>
        <end position="389"/>
    </location>
</feature>
<feature type="topological domain" description="Extracellular" evidence="2">
    <location>
        <begin position="1"/>
        <end position="54"/>
    </location>
</feature>
<feature type="transmembrane region" description="Helical; Name=1" evidence="2">
    <location>
        <begin position="55"/>
        <end position="77"/>
    </location>
</feature>
<feature type="topological domain" description="Cytoplasmic" evidence="2">
    <location>
        <begin position="78"/>
        <end position="87"/>
    </location>
</feature>
<feature type="transmembrane region" description="Helical; Name=2" evidence="2">
    <location>
        <begin position="88"/>
        <end position="113"/>
    </location>
</feature>
<feature type="topological domain" description="Extracellular" evidence="2">
    <location>
        <begin position="114"/>
        <end position="124"/>
    </location>
</feature>
<feature type="transmembrane region" description="Helical; Name=3" evidence="2">
    <location>
        <begin position="125"/>
        <end position="146"/>
    </location>
</feature>
<feature type="topological domain" description="Cytoplasmic" evidence="2">
    <location>
        <begin position="147"/>
        <end position="167"/>
    </location>
</feature>
<feature type="transmembrane region" description="Helical; Name=4" evidence="2">
    <location>
        <begin position="168"/>
        <end position="186"/>
    </location>
</feature>
<feature type="topological domain" description="Extracellular" evidence="2">
    <location>
        <begin position="187"/>
        <end position="209"/>
    </location>
</feature>
<feature type="transmembrane region" description="Helical; Name=5" evidence="2">
    <location>
        <begin position="210"/>
        <end position="232"/>
    </location>
</feature>
<feature type="topological domain" description="Cytoplasmic" evidence="2">
    <location>
        <begin position="233"/>
        <end position="258"/>
    </location>
</feature>
<feature type="transmembrane region" description="Helical; Name=6" evidence="2">
    <location>
        <begin position="259"/>
        <end position="284"/>
    </location>
</feature>
<feature type="topological domain" description="Extracellular" evidence="2">
    <location>
        <begin position="285"/>
        <end position="297"/>
    </location>
</feature>
<feature type="transmembrane region" description="Helical; Name=7" evidence="2">
    <location>
        <begin position="298"/>
        <end position="318"/>
    </location>
</feature>
<feature type="topological domain" description="Cytoplasmic" evidence="2">
    <location>
        <begin position="319"/>
        <end position="389"/>
    </location>
</feature>
<feature type="region of interest" description="Disordered" evidence="4">
    <location>
        <begin position="1"/>
        <end position="39"/>
    </location>
</feature>
<feature type="region of interest" description="Disordered" evidence="4">
    <location>
        <begin position="328"/>
        <end position="366"/>
    </location>
</feature>
<feature type="compositionally biased region" description="Polar residues" evidence="4">
    <location>
        <begin position="1"/>
        <end position="10"/>
    </location>
</feature>
<feature type="compositionally biased region" description="Polar residues" evidence="4">
    <location>
        <begin position="28"/>
        <end position="39"/>
    </location>
</feature>
<feature type="compositionally biased region" description="Polar residues" evidence="4">
    <location>
        <begin position="355"/>
        <end position="366"/>
    </location>
</feature>
<feature type="glycosylation site" description="N-linked (GlcNAc...) asparagine" evidence="2">
    <location>
        <position position="29"/>
    </location>
</feature>
<feature type="glycosylation site" description="N-linked (GlcNAc...) asparagine" evidence="2">
    <location>
        <position position="33"/>
    </location>
</feature>
<feature type="disulfide bond" evidence="3">
    <location>
        <begin position="123"/>
        <end position="199"/>
    </location>
</feature>
<dbReference type="EMBL" id="AY065982">
    <property type="protein sequence ID" value="AAL55428.1"/>
    <property type="molecule type" value="mRNA"/>
</dbReference>
<dbReference type="RefSeq" id="NP_001028066.1">
    <property type="nucleotide sequence ID" value="NM_001032894.1"/>
</dbReference>
<dbReference type="SMR" id="Q8HYC3"/>
<dbReference type="FunCoup" id="Q8HYC3">
    <property type="interactions" value="855"/>
</dbReference>
<dbReference type="STRING" id="9544.ENSMMUP00000001486"/>
<dbReference type="ChEMBL" id="CHEMBL4845"/>
<dbReference type="GlyCosmos" id="Q8HYC3">
    <property type="glycosylation" value="2 sites, No reported glycans"/>
</dbReference>
<dbReference type="PaxDb" id="9544-ENSMMUP00000001486"/>
<dbReference type="GeneID" id="574245"/>
<dbReference type="KEGG" id="mcc:574245"/>
<dbReference type="CTD" id="2837"/>
<dbReference type="eggNOG" id="KOG3656">
    <property type="taxonomic scope" value="Eukaryota"/>
</dbReference>
<dbReference type="InParanoid" id="Q8HYC3"/>
<dbReference type="OrthoDB" id="6076970at2759"/>
<dbReference type="PRO" id="PR:Q8HYC3"/>
<dbReference type="Proteomes" id="UP000006718">
    <property type="component" value="Unassembled WGS sequence"/>
</dbReference>
<dbReference type="GO" id="GO:0005886">
    <property type="term" value="C:plasma membrane"/>
    <property type="evidence" value="ECO:0000318"/>
    <property type="project" value="GO_Central"/>
</dbReference>
<dbReference type="GO" id="GO:0001604">
    <property type="term" value="F:urotensin II receptor activity"/>
    <property type="evidence" value="ECO:0000318"/>
    <property type="project" value="GO_Central"/>
</dbReference>
<dbReference type="GO" id="GO:0097746">
    <property type="term" value="P:blood vessel diameter maintenance"/>
    <property type="evidence" value="ECO:0007669"/>
    <property type="project" value="InterPro"/>
</dbReference>
<dbReference type="GO" id="GO:0007218">
    <property type="term" value="P:neuropeptide signaling pathway"/>
    <property type="evidence" value="ECO:0000318"/>
    <property type="project" value="GO_Central"/>
</dbReference>
<dbReference type="GO" id="GO:0008217">
    <property type="term" value="P:regulation of blood pressure"/>
    <property type="evidence" value="ECO:0007669"/>
    <property type="project" value="InterPro"/>
</dbReference>
<dbReference type="CDD" id="cd14999">
    <property type="entry name" value="7tmA_UII-R"/>
    <property type="match status" value="1"/>
</dbReference>
<dbReference type="FunFam" id="1.20.1070.10:FF:000183">
    <property type="entry name" value="Urotensin-2 receptor"/>
    <property type="match status" value="1"/>
</dbReference>
<dbReference type="Gene3D" id="1.20.1070.10">
    <property type="entry name" value="Rhodopsin 7-helix transmembrane proteins"/>
    <property type="match status" value="1"/>
</dbReference>
<dbReference type="InterPro" id="IPR000276">
    <property type="entry name" value="GPCR_Rhodpsn"/>
</dbReference>
<dbReference type="InterPro" id="IPR017452">
    <property type="entry name" value="GPCR_Rhodpsn_7TM"/>
</dbReference>
<dbReference type="InterPro" id="IPR000670">
    <property type="entry name" value="Urot_II_rcpt"/>
</dbReference>
<dbReference type="PANTHER" id="PTHR24230">
    <property type="entry name" value="G-PROTEIN COUPLED RECEPTOR"/>
    <property type="match status" value="1"/>
</dbReference>
<dbReference type="PANTHER" id="PTHR24230:SF60">
    <property type="entry name" value="UROTENSIN-2 RECEPTOR"/>
    <property type="match status" value="1"/>
</dbReference>
<dbReference type="Pfam" id="PF00001">
    <property type="entry name" value="7tm_1"/>
    <property type="match status" value="1"/>
</dbReference>
<dbReference type="PRINTS" id="PR00237">
    <property type="entry name" value="GPCRRHODOPSN"/>
</dbReference>
<dbReference type="PRINTS" id="PR00647">
    <property type="entry name" value="UROTENSIN2R"/>
</dbReference>
<dbReference type="SUPFAM" id="SSF81321">
    <property type="entry name" value="Family A G protein-coupled receptor-like"/>
    <property type="match status" value="1"/>
</dbReference>
<dbReference type="PROSITE" id="PS00237">
    <property type="entry name" value="G_PROTEIN_RECEP_F1_1"/>
    <property type="match status" value="1"/>
</dbReference>
<dbReference type="PROSITE" id="PS50262">
    <property type="entry name" value="G_PROTEIN_RECEP_F1_2"/>
    <property type="match status" value="1"/>
</dbReference>